<reference key="1">
    <citation type="journal article" date="2007" name="J. Bacteriol.">
        <title>Complete genome of acute rheumatic fever-associated serotype M5 Streptococcus pyogenes strain Manfredo.</title>
        <authorList>
            <person name="Holden M.T.G."/>
            <person name="Scott A."/>
            <person name="Cherevach I."/>
            <person name="Chillingworth T."/>
            <person name="Churcher C."/>
            <person name="Cronin A."/>
            <person name="Dowd L."/>
            <person name="Feltwell T."/>
            <person name="Hamlin N."/>
            <person name="Holroyd S."/>
            <person name="Jagels K."/>
            <person name="Moule S."/>
            <person name="Mungall K."/>
            <person name="Quail M.A."/>
            <person name="Price C."/>
            <person name="Rabbinowitsch E."/>
            <person name="Sharp S."/>
            <person name="Skelton J."/>
            <person name="Whitehead S."/>
            <person name="Barrell B.G."/>
            <person name="Kehoe M."/>
            <person name="Parkhill J."/>
        </authorList>
    </citation>
    <scope>NUCLEOTIDE SEQUENCE [LARGE SCALE GENOMIC DNA]</scope>
    <source>
        <strain>Manfredo</strain>
    </source>
</reference>
<name>RL23_STRPG</name>
<sequence length="98" mass="10732">MNLYDVIKKPVITEKSMIALEAGKYTFEVDTRAHKLLIKQAVEAAFDGVKVASVNTVNVKPKAKRVGRYTGFTSKTKKAIITLTADSKAIELFAAEAE</sequence>
<protein>
    <recommendedName>
        <fullName evidence="1">Large ribosomal subunit protein uL23</fullName>
    </recommendedName>
    <alternativeName>
        <fullName evidence="2">50S ribosomal protein L23</fullName>
    </alternativeName>
</protein>
<proteinExistence type="inferred from homology"/>
<accession>A2RC16</accession>
<gene>
    <name evidence="1" type="primary">rplW</name>
    <name type="ordered locus">SpyM50046</name>
</gene>
<feature type="chain" id="PRO_1000068170" description="Large ribosomal subunit protein uL23">
    <location>
        <begin position="1"/>
        <end position="98"/>
    </location>
</feature>
<keyword id="KW-0687">Ribonucleoprotein</keyword>
<keyword id="KW-0689">Ribosomal protein</keyword>
<keyword id="KW-0694">RNA-binding</keyword>
<keyword id="KW-0699">rRNA-binding</keyword>
<evidence type="ECO:0000255" key="1">
    <source>
        <dbReference type="HAMAP-Rule" id="MF_01369"/>
    </source>
</evidence>
<evidence type="ECO:0000305" key="2"/>
<dbReference type="EMBL" id="AM295007">
    <property type="protein sequence ID" value="CAM29388.1"/>
    <property type="molecule type" value="Genomic_DNA"/>
</dbReference>
<dbReference type="RefSeq" id="WP_002986656.1">
    <property type="nucleotide sequence ID" value="NC_009332.1"/>
</dbReference>
<dbReference type="SMR" id="A2RC16"/>
<dbReference type="KEGG" id="spf:SpyM50046"/>
<dbReference type="HOGENOM" id="CLU_037562_3_2_9"/>
<dbReference type="GO" id="GO:1990904">
    <property type="term" value="C:ribonucleoprotein complex"/>
    <property type="evidence" value="ECO:0007669"/>
    <property type="project" value="UniProtKB-KW"/>
</dbReference>
<dbReference type="GO" id="GO:0005840">
    <property type="term" value="C:ribosome"/>
    <property type="evidence" value="ECO:0007669"/>
    <property type="project" value="UniProtKB-KW"/>
</dbReference>
<dbReference type="GO" id="GO:0019843">
    <property type="term" value="F:rRNA binding"/>
    <property type="evidence" value="ECO:0007669"/>
    <property type="project" value="UniProtKB-UniRule"/>
</dbReference>
<dbReference type="GO" id="GO:0003735">
    <property type="term" value="F:structural constituent of ribosome"/>
    <property type="evidence" value="ECO:0007669"/>
    <property type="project" value="InterPro"/>
</dbReference>
<dbReference type="GO" id="GO:0006412">
    <property type="term" value="P:translation"/>
    <property type="evidence" value="ECO:0007669"/>
    <property type="project" value="UniProtKB-UniRule"/>
</dbReference>
<dbReference type="FunFam" id="3.30.70.330:FF:000001">
    <property type="entry name" value="50S ribosomal protein L23"/>
    <property type="match status" value="1"/>
</dbReference>
<dbReference type="Gene3D" id="3.30.70.330">
    <property type="match status" value="1"/>
</dbReference>
<dbReference type="HAMAP" id="MF_01369_B">
    <property type="entry name" value="Ribosomal_uL23_B"/>
    <property type="match status" value="1"/>
</dbReference>
<dbReference type="InterPro" id="IPR012677">
    <property type="entry name" value="Nucleotide-bd_a/b_plait_sf"/>
</dbReference>
<dbReference type="InterPro" id="IPR013025">
    <property type="entry name" value="Ribosomal_uL23-like"/>
</dbReference>
<dbReference type="InterPro" id="IPR012678">
    <property type="entry name" value="Ribosomal_uL23/eL15/eS24_sf"/>
</dbReference>
<dbReference type="InterPro" id="IPR001014">
    <property type="entry name" value="Ribosomal_uL23_CS"/>
</dbReference>
<dbReference type="NCBIfam" id="NF004361">
    <property type="entry name" value="PRK05738.2-1"/>
    <property type="match status" value="1"/>
</dbReference>
<dbReference type="NCBIfam" id="NF004363">
    <property type="entry name" value="PRK05738.2-4"/>
    <property type="match status" value="1"/>
</dbReference>
<dbReference type="PANTHER" id="PTHR11620">
    <property type="entry name" value="60S RIBOSOMAL PROTEIN L23A"/>
    <property type="match status" value="1"/>
</dbReference>
<dbReference type="Pfam" id="PF00276">
    <property type="entry name" value="Ribosomal_L23"/>
    <property type="match status" value="1"/>
</dbReference>
<dbReference type="SUPFAM" id="SSF54189">
    <property type="entry name" value="Ribosomal proteins S24e, L23 and L15e"/>
    <property type="match status" value="1"/>
</dbReference>
<dbReference type="PROSITE" id="PS00050">
    <property type="entry name" value="RIBOSOMAL_L23"/>
    <property type="match status" value="1"/>
</dbReference>
<organism>
    <name type="scientific">Streptococcus pyogenes serotype M5 (strain Manfredo)</name>
    <dbReference type="NCBI Taxonomy" id="160491"/>
    <lineage>
        <taxon>Bacteria</taxon>
        <taxon>Bacillati</taxon>
        <taxon>Bacillota</taxon>
        <taxon>Bacilli</taxon>
        <taxon>Lactobacillales</taxon>
        <taxon>Streptococcaceae</taxon>
        <taxon>Streptococcus</taxon>
    </lineage>
</organism>
<comment type="function">
    <text evidence="1">One of the early assembly proteins it binds 23S rRNA. One of the proteins that surrounds the polypeptide exit tunnel on the outside of the ribosome. Forms the main docking site for trigger factor binding to the ribosome.</text>
</comment>
<comment type="subunit">
    <text evidence="1">Part of the 50S ribosomal subunit. Contacts protein L29, and trigger factor when it is bound to the ribosome.</text>
</comment>
<comment type="similarity">
    <text evidence="1">Belongs to the universal ribosomal protein uL23 family.</text>
</comment>